<organism>
    <name type="scientific">Synechococcus sp. (strain ATCC 27144 / PCC 6301 / SAUG 1402/1)</name>
    <name type="common">Anacystis nidulans</name>
    <dbReference type="NCBI Taxonomy" id="269084"/>
    <lineage>
        <taxon>Bacteria</taxon>
        <taxon>Bacillati</taxon>
        <taxon>Cyanobacteriota</taxon>
        <taxon>Cyanophyceae</taxon>
        <taxon>Synechococcales</taxon>
        <taxon>Synechococcaceae</taxon>
        <taxon>Synechococcus</taxon>
    </lineage>
</organism>
<gene>
    <name type="primary">psaD</name>
    <name type="ordered locus">syc0543_c</name>
</gene>
<name>PSAD_SYNP6</name>
<accession>P23076</accession>
<accession>Q5N4N6</accession>
<feature type="initiator methionine" description="Removed" evidence="2 3">
    <location>
        <position position="1"/>
    </location>
</feature>
<feature type="chain" id="PRO_0000206053" description="Photosystem I reaction center subunit II">
    <location>
        <begin position="2"/>
        <end position="142"/>
    </location>
</feature>
<feature type="region of interest" description="Disordered" evidence="1">
    <location>
        <begin position="119"/>
        <end position="142"/>
    </location>
</feature>
<feature type="sequence conflict" description="In Ref. 2; AA sequence." evidence="4" ref="2">
    <original>RF</original>
    <variation>DV</variation>
    <location>
        <begin position="88"/>
        <end position="89"/>
    </location>
</feature>
<feature type="sequence conflict" description="In Ref. 2; AA sequence." evidence="4" ref="2">
    <original>A</original>
    <variation>G</variation>
    <location>
        <position position="93"/>
    </location>
</feature>
<feature type="sequence conflict" description="In Ref. 2; AA sequence." evidence="4" ref="2">
    <original>G</original>
    <variation>E</variation>
    <location>
        <position position="96"/>
    </location>
</feature>
<feature type="sequence conflict" description="In Ref. 2; AA sequence." evidence="4" ref="2">
    <original>H</original>
    <variation>K</variation>
    <location>
        <position position="99"/>
    </location>
</feature>
<proteinExistence type="evidence at protein level"/>
<evidence type="ECO:0000256" key="1">
    <source>
        <dbReference type="SAM" id="MobiDB-lite"/>
    </source>
</evidence>
<evidence type="ECO:0000269" key="2">
    <source>
    </source>
</evidence>
<evidence type="ECO:0000269" key="3">
    <source ref="2"/>
</evidence>
<evidence type="ECO:0000305" key="4"/>
<comment type="function">
    <text>PsaD can form complexes with ferredoxin and ferredoxin-oxidoreductase in photosystem I (PS I) reaction center.</text>
</comment>
<comment type="similarity">
    <text evidence="4">Belongs to the PsaD family.</text>
</comment>
<comment type="sequence caution" evidence="4">
    <conflict type="frameshift">
        <sequence resource="EMBL-CDS" id="BAD78733"/>
    </conflict>
</comment>
<sequence length="142" mass="15636">MAETLTGKTPVFGGSTGGLLKSAETEEKYAITWTSTKEQVFELPTGGAAVMHEGDNLLYFARKEQALALGTQLRTKFKPKIESYKIYRFFPGADVGYLHPKDGVFPEKVNEGRSFAGKVDRRIGQNPNPATIKFTGKQPYTA</sequence>
<reference key="1">
    <citation type="journal article" date="2007" name="Photosyn. Res.">
        <title>Complete nucleotide sequence of the freshwater unicellular cyanobacterium Synechococcus elongatus PCC 6301 chromosome: gene content and organization.</title>
        <authorList>
            <person name="Sugita C."/>
            <person name="Ogata K."/>
            <person name="Shikata M."/>
            <person name="Jikuya H."/>
            <person name="Takano J."/>
            <person name="Furumichi M."/>
            <person name="Kanehisa M."/>
            <person name="Omata T."/>
            <person name="Sugiura M."/>
            <person name="Sugita M."/>
        </authorList>
    </citation>
    <scope>NUCLEOTIDE SEQUENCE [LARGE SCALE GENOMIC DNA]</scope>
    <source>
        <strain>ATCC 27144 / PCC 6301 / SAUG 1402/1</strain>
    </source>
</reference>
<reference key="2">
    <citation type="journal article" date="1988" name="Arch. Microbiol.">
        <title>Structural studies on cyanobacterial photosystem I. Purification and characterization of two low molecular weight polypeptides.</title>
        <authorList>
            <person name="Alhadeff M."/>
            <person name="Lundell D.J."/>
            <person name="Glazer A.N."/>
        </authorList>
    </citation>
    <scope>PROTEIN SEQUENCE OF 2-99</scope>
</reference>
<reference key="3">
    <citation type="journal article" date="1991" name="Biochim. Biophys. Acta">
        <title>Polypeptide composition of the Photosystem I complex and the Photosystem I core protein from Synechococcus sp. PCC 6301.</title>
        <authorList>
            <person name="Li N."/>
            <person name="Warren P.V."/>
            <person name="Golbeck J.H."/>
            <person name="Frank G."/>
            <person name="Zuber H."/>
            <person name="Bryant D.A."/>
        </authorList>
    </citation>
    <scope>PROTEIN SEQUENCE OF 2-25</scope>
</reference>
<protein>
    <recommendedName>
        <fullName>Photosystem I reaction center subunit II</fullName>
    </recommendedName>
    <alternativeName>
        <fullName>Photosystem I 16 kDa polypeptide</fullName>
        <shortName>PSI-D</shortName>
    </alternativeName>
</protein>
<dbReference type="EMBL" id="AP008231">
    <property type="protein sequence ID" value="BAD78733.1"/>
    <property type="status" value="ALT_FRAME"/>
    <property type="molecule type" value="Genomic_DNA"/>
</dbReference>
<dbReference type="SMR" id="P23076"/>
<dbReference type="KEGG" id="syc:syc0543_c"/>
<dbReference type="eggNOG" id="ENOG502ZBN6">
    <property type="taxonomic scope" value="Bacteria"/>
</dbReference>
<dbReference type="Proteomes" id="UP000001175">
    <property type="component" value="Chromosome"/>
</dbReference>
<dbReference type="GO" id="GO:0009538">
    <property type="term" value="C:photosystem I reaction center"/>
    <property type="evidence" value="ECO:0007669"/>
    <property type="project" value="InterPro"/>
</dbReference>
<dbReference type="GO" id="GO:0015979">
    <property type="term" value="P:photosynthesis"/>
    <property type="evidence" value="ECO:0007669"/>
    <property type="project" value="UniProtKB-KW"/>
</dbReference>
<dbReference type="Gene3D" id="3.30.1470.10">
    <property type="entry name" value="Photosystem I PsaD, reaction center subunit II"/>
    <property type="match status" value="1"/>
</dbReference>
<dbReference type="InterPro" id="IPR003685">
    <property type="entry name" value="PsaD"/>
</dbReference>
<dbReference type="InterPro" id="IPR036579">
    <property type="entry name" value="PsaD_sf"/>
</dbReference>
<dbReference type="PANTHER" id="PTHR31982:SF5">
    <property type="entry name" value="PHOTOSYSTEM I REACTION CENTER SUBUNIT II, CHLOROPLASTIC"/>
    <property type="match status" value="1"/>
</dbReference>
<dbReference type="PANTHER" id="PTHR31982">
    <property type="entry name" value="PHOTOSYSTEM I REACTION CENTER SUBUNIT II-1, CHLOROPLASTIC-RELATED"/>
    <property type="match status" value="1"/>
</dbReference>
<dbReference type="Pfam" id="PF02531">
    <property type="entry name" value="PsaD"/>
    <property type="match status" value="1"/>
</dbReference>
<dbReference type="SUPFAM" id="SSF64234">
    <property type="entry name" value="Photosystem I subunit PsaD"/>
    <property type="match status" value="1"/>
</dbReference>
<keyword id="KW-0903">Direct protein sequencing</keyword>
<keyword id="KW-0602">Photosynthesis</keyword>
<keyword id="KW-0603">Photosystem I</keyword>